<protein>
    <recommendedName>
        <fullName evidence="1">NAD(P)H-quinone oxidoreductase subunit N</fullName>
        <ecNumber evidence="1">7.1.1.-</ecNumber>
    </recommendedName>
    <alternativeName>
        <fullName evidence="1">NAD(P)H dehydrogenase I subunit N</fullName>
        <shortName evidence="1">NDH-1 subunit N</shortName>
        <shortName evidence="1">NDH-N</shortName>
    </alternativeName>
</protein>
<name>NDHN_PICP2</name>
<gene>
    <name evidence="1" type="primary">ndhN</name>
    <name type="ordered locus">SYNPCC7002_A1143</name>
</gene>
<feature type="chain" id="PRO_0000352234" description="NAD(P)H-quinone oxidoreductase subunit N">
    <location>
        <begin position="1"/>
        <end position="157"/>
    </location>
</feature>
<comment type="function">
    <text evidence="1">NDH-1 shuttles electrons from an unknown electron donor, via FMN and iron-sulfur (Fe-S) centers, to quinones in the respiratory and/or the photosynthetic chain. The immediate electron acceptor for the enzyme in this species is believed to be plastoquinone. Couples the redox reaction to proton translocation, and thus conserves the redox energy in a proton gradient. Cyanobacterial NDH-1 also plays a role in inorganic carbon-concentration.</text>
</comment>
<comment type="catalytic activity">
    <reaction evidence="1">
        <text>a plastoquinone + NADH + (n+1) H(+)(in) = a plastoquinol + NAD(+) + n H(+)(out)</text>
        <dbReference type="Rhea" id="RHEA:42608"/>
        <dbReference type="Rhea" id="RHEA-COMP:9561"/>
        <dbReference type="Rhea" id="RHEA-COMP:9562"/>
        <dbReference type="ChEBI" id="CHEBI:15378"/>
        <dbReference type="ChEBI" id="CHEBI:17757"/>
        <dbReference type="ChEBI" id="CHEBI:57540"/>
        <dbReference type="ChEBI" id="CHEBI:57945"/>
        <dbReference type="ChEBI" id="CHEBI:62192"/>
    </reaction>
</comment>
<comment type="catalytic activity">
    <reaction evidence="1">
        <text>a plastoquinone + NADPH + (n+1) H(+)(in) = a plastoquinol + NADP(+) + n H(+)(out)</text>
        <dbReference type="Rhea" id="RHEA:42612"/>
        <dbReference type="Rhea" id="RHEA-COMP:9561"/>
        <dbReference type="Rhea" id="RHEA-COMP:9562"/>
        <dbReference type="ChEBI" id="CHEBI:15378"/>
        <dbReference type="ChEBI" id="CHEBI:17757"/>
        <dbReference type="ChEBI" id="CHEBI:57783"/>
        <dbReference type="ChEBI" id="CHEBI:58349"/>
        <dbReference type="ChEBI" id="CHEBI:62192"/>
    </reaction>
</comment>
<comment type="subunit">
    <text evidence="1">NDH-1 can be composed of about 15 different subunits; different subcomplexes with different compositions have been identified which probably have different functions.</text>
</comment>
<comment type="subcellular location">
    <subcellularLocation>
        <location evidence="1">Cellular thylakoid membrane</location>
        <topology evidence="1">Peripheral membrane protein</topology>
        <orientation evidence="1">Cytoplasmic side</orientation>
    </subcellularLocation>
</comment>
<comment type="similarity">
    <text evidence="1">Belongs to the complex I NdhN subunit family.</text>
</comment>
<keyword id="KW-0472">Membrane</keyword>
<keyword id="KW-0520">NAD</keyword>
<keyword id="KW-0521">NADP</keyword>
<keyword id="KW-0618">Plastoquinone</keyword>
<keyword id="KW-0874">Quinone</keyword>
<keyword id="KW-1185">Reference proteome</keyword>
<keyword id="KW-0793">Thylakoid</keyword>
<keyword id="KW-1278">Translocase</keyword>
<keyword id="KW-0813">Transport</keyword>
<reference key="1">
    <citation type="submission" date="2008-02" db="EMBL/GenBank/DDBJ databases">
        <title>Complete sequence of Synechococcus sp. PCC 7002.</title>
        <authorList>
            <person name="Li T."/>
            <person name="Zhao J."/>
            <person name="Zhao C."/>
            <person name="Liu Z."/>
            <person name="Zhao F."/>
            <person name="Marquardt J."/>
            <person name="Nomura C.T."/>
            <person name="Persson S."/>
            <person name="Detter J.C."/>
            <person name="Richardson P.M."/>
            <person name="Lanz C."/>
            <person name="Schuster S.C."/>
            <person name="Wang J."/>
            <person name="Li S."/>
            <person name="Huang X."/>
            <person name="Cai T."/>
            <person name="Yu Z."/>
            <person name="Luo J."/>
            <person name="Zhao J."/>
            <person name="Bryant D.A."/>
        </authorList>
    </citation>
    <scope>NUCLEOTIDE SEQUENCE [LARGE SCALE GENOMIC DNA]</scope>
    <source>
        <strain>ATCC 27264 / PCC 7002 / PR-6</strain>
    </source>
</reference>
<sequence length="157" mass="17191">MALLTTGKSFIRTVEKSGAVAVYAPLEGGFEGRYVRRLRCSGYSVVNLTARGLGDVAAYLTQYHGIRPPHLGKKDIAGSGAAVGLRYYVPGIASYQLENLPQKSKGIILWIIEGFVLSRQEQEYLVSLTQDNPQIKVVVEMGGDRQFSFKPLADLLV</sequence>
<dbReference type="EC" id="7.1.1.-" evidence="1"/>
<dbReference type="EMBL" id="CP000951">
    <property type="protein sequence ID" value="ACA99143.1"/>
    <property type="molecule type" value="Genomic_DNA"/>
</dbReference>
<dbReference type="RefSeq" id="WP_012306766.1">
    <property type="nucleotide sequence ID" value="NZ_JAHHPU010000001.1"/>
</dbReference>
<dbReference type="SMR" id="B1XK97"/>
<dbReference type="STRING" id="32049.SYNPCC7002_A1143"/>
<dbReference type="KEGG" id="syp:SYNPCC7002_A1143"/>
<dbReference type="eggNOG" id="ENOG502ZBMI">
    <property type="taxonomic scope" value="Bacteria"/>
</dbReference>
<dbReference type="HOGENOM" id="CLU_087432_0_0_3"/>
<dbReference type="Proteomes" id="UP000001688">
    <property type="component" value="Chromosome"/>
</dbReference>
<dbReference type="GO" id="GO:0031676">
    <property type="term" value="C:plasma membrane-derived thylakoid membrane"/>
    <property type="evidence" value="ECO:0007669"/>
    <property type="project" value="UniProtKB-SubCell"/>
</dbReference>
<dbReference type="GO" id="GO:0016655">
    <property type="term" value="F:oxidoreductase activity, acting on NAD(P)H, quinone or similar compound as acceptor"/>
    <property type="evidence" value="ECO:0007669"/>
    <property type="project" value="UniProtKB-UniRule"/>
</dbReference>
<dbReference type="GO" id="GO:0048038">
    <property type="term" value="F:quinone binding"/>
    <property type="evidence" value="ECO:0007669"/>
    <property type="project" value="UniProtKB-KW"/>
</dbReference>
<dbReference type="HAMAP" id="MF_01353">
    <property type="entry name" value="NDH1_NDH1N"/>
    <property type="match status" value="1"/>
</dbReference>
<dbReference type="InterPro" id="IPR020874">
    <property type="entry name" value="NAD(P)H-quinone_OxRdtase_su_N"/>
</dbReference>
<dbReference type="PANTHER" id="PTHR35515">
    <property type="entry name" value="NAD(P)H-QUINONE OXIDOREDUCTASE SUBUNIT N, CHLOROPLASTIC"/>
    <property type="match status" value="1"/>
</dbReference>
<dbReference type="PANTHER" id="PTHR35515:SF1">
    <property type="entry name" value="NAD(P)H-QUINONE OXIDOREDUCTASE SUBUNIT N, CHLOROPLASTIC"/>
    <property type="match status" value="1"/>
</dbReference>
<dbReference type="Pfam" id="PF11909">
    <property type="entry name" value="NdhN"/>
    <property type="match status" value="1"/>
</dbReference>
<organism>
    <name type="scientific">Picosynechococcus sp. (strain ATCC 27264 / PCC 7002 / PR-6)</name>
    <name type="common">Agmenellum quadruplicatum</name>
    <dbReference type="NCBI Taxonomy" id="32049"/>
    <lineage>
        <taxon>Bacteria</taxon>
        <taxon>Bacillati</taxon>
        <taxon>Cyanobacteriota</taxon>
        <taxon>Cyanophyceae</taxon>
        <taxon>Oscillatoriophycideae</taxon>
        <taxon>Chroococcales</taxon>
        <taxon>Geminocystaceae</taxon>
        <taxon>Picosynechococcus</taxon>
    </lineage>
</organism>
<accession>B1XK97</accession>
<proteinExistence type="inferred from homology"/>
<evidence type="ECO:0000255" key="1">
    <source>
        <dbReference type="HAMAP-Rule" id="MF_01353"/>
    </source>
</evidence>